<accession>A4QCV0</accession>
<comment type="function">
    <text evidence="1">Catalyzes the reversible conversion of 2-phosphoglycerate (2-PG) into phosphoenolpyruvate (PEP). It is essential for the degradation of carbohydrates via glycolysis.</text>
</comment>
<comment type="catalytic activity">
    <reaction evidence="1">
        <text>(2R)-2-phosphoglycerate = phosphoenolpyruvate + H2O</text>
        <dbReference type="Rhea" id="RHEA:10164"/>
        <dbReference type="ChEBI" id="CHEBI:15377"/>
        <dbReference type="ChEBI" id="CHEBI:58289"/>
        <dbReference type="ChEBI" id="CHEBI:58702"/>
        <dbReference type="EC" id="4.2.1.11"/>
    </reaction>
</comment>
<comment type="cofactor">
    <cofactor evidence="1">
        <name>Mg(2+)</name>
        <dbReference type="ChEBI" id="CHEBI:18420"/>
    </cofactor>
    <text evidence="1">Binds a second Mg(2+) ion via substrate during catalysis.</text>
</comment>
<comment type="pathway">
    <text evidence="1">Carbohydrate degradation; glycolysis; pyruvate from D-glyceraldehyde 3-phosphate: step 4/5.</text>
</comment>
<comment type="subcellular location">
    <subcellularLocation>
        <location evidence="1">Cytoplasm</location>
    </subcellularLocation>
    <subcellularLocation>
        <location evidence="1">Secreted</location>
    </subcellularLocation>
    <subcellularLocation>
        <location evidence="1">Cell surface</location>
    </subcellularLocation>
    <text evidence="1">Fractions of enolase are present in both the cytoplasm and on the cell surface.</text>
</comment>
<comment type="similarity">
    <text evidence="1">Belongs to the enolase family.</text>
</comment>
<gene>
    <name evidence="1" type="primary">eno</name>
    <name type="ordered locus">cgR_1071</name>
</gene>
<reference key="1">
    <citation type="journal article" date="2007" name="Microbiology">
        <title>Comparative analysis of the Corynebacterium glutamicum group and complete genome sequence of strain R.</title>
        <authorList>
            <person name="Yukawa H."/>
            <person name="Omumasaba C.A."/>
            <person name="Nonaka H."/>
            <person name="Kos P."/>
            <person name="Okai N."/>
            <person name="Suzuki N."/>
            <person name="Suda M."/>
            <person name="Tsuge Y."/>
            <person name="Watanabe J."/>
            <person name="Ikeda Y."/>
            <person name="Vertes A.A."/>
            <person name="Inui M."/>
        </authorList>
    </citation>
    <scope>NUCLEOTIDE SEQUENCE [LARGE SCALE GENOMIC DNA]</scope>
    <source>
        <strain>R</strain>
    </source>
</reference>
<sequence length="425" mass="44949">MAEIMHVFAREILDSRGNPTVEAEVFLDDGSHGVAGVPSGASTGVHEAHELRDGGDRYLGKGVLKAVENVNEEIGDELAGLEADDQRLIDEAMIKLDGTANKSRLGANAILGVSMAVAKAAADSAGLPLFRYIGGPNAHVLPVPMMNIINGGAHADSGVDVQEFMIAPIGAETFSEALRNGAEVYHALKSVIKEKGLSTGLGDEGGFAPSVGSTREALDLIVEAIEKAGFTPGKDIALALDVASSEFFKDGTYHFEGGQHSAAEMANVYAELVDAYPIVSIEDPLQEDDWEGYTNLTATIGDKVQIVGDDFFVTNPERLKEGIAKKAANSILVKVNQIGTLTETFDAVDMAHRAGYTSMMSHRSGETEDTTIADLAVALNCGQIKTGAPARSDRVAKYNQLLRIEQLLGDAGVYAGRSAFPRFQG</sequence>
<organism>
    <name type="scientific">Corynebacterium glutamicum (strain R)</name>
    <dbReference type="NCBI Taxonomy" id="340322"/>
    <lineage>
        <taxon>Bacteria</taxon>
        <taxon>Bacillati</taxon>
        <taxon>Actinomycetota</taxon>
        <taxon>Actinomycetes</taxon>
        <taxon>Mycobacteriales</taxon>
        <taxon>Corynebacteriaceae</taxon>
        <taxon>Corynebacterium</taxon>
    </lineage>
</organism>
<keyword id="KW-0963">Cytoplasm</keyword>
<keyword id="KW-0324">Glycolysis</keyword>
<keyword id="KW-0456">Lyase</keyword>
<keyword id="KW-0460">Magnesium</keyword>
<keyword id="KW-0479">Metal-binding</keyword>
<keyword id="KW-0964">Secreted</keyword>
<protein>
    <recommendedName>
        <fullName evidence="1">Enolase</fullName>
        <ecNumber evidence="1">4.2.1.11</ecNumber>
    </recommendedName>
    <alternativeName>
        <fullName evidence="1">2-phospho-D-glycerate hydro-lyase</fullName>
    </alternativeName>
    <alternativeName>
        <fullName evidence="1">2-phosphoglycerate dehydratase</fullName>
    </alternativeName>
</protein>
<name>ENO_CORGB</name>
<dbReference type="EC" id="4.2.1.11" evidence="1"/>
<dbReference type="EMBL" id="AP009044">
    <property type="protein sequence ID" value="BAF54047.1"/>
    <property type="molecule type" value="Genomic_DNA"/>
</dbReference>
<dbReference type="RefSeq" id="WP_003856756.1">
    <property type="nucleotide sequence ID" value="NC_009342.1"/>
</dbReference>
<dbReference type="SMR" id="A4QCV0"/>
<dbReference type="GeneID" id="1018964"/>
<dbReference type="KEGG" id="cgt:cgR_1071"/>
<dbReference type="HOGENOM" id="CLU_031223_2_1_11"/>
<dbReference type="PhylomeDB" id="A4QCV0"/>
<dbReference type="UniPathway" id="UPA00109">
    <property type="reaction ID" value="UER00187"/>
</dbReference>
<dbReference type="Proteomes" id="UP000006698">
    <property type="component" value="Chromosome"/>
</dbReference>
<dbReference type="GO" id="GO:0009986">
    <property type="term" value="C:cell surface"/>
    <property type="evidence" value="ECO:0007669"/>
    <property type="project" value="UniProtKB-SubCell"/>
</dbReference>
<dbReference type="GO" id="GO:0005576">
    <property type="term" value="C:extracellular region"/>
    <property type="evidence" value="ECO:0007669"/>
    <property type="project" value="UniProtKB-SubCell"/>
</dbReference>
<dbReference type="GO" id="GO:0000015">
    <property type="term" value="C:phosphopyruvate hydratase complex"/>
    <property type="evidence" value="ECO:0007669"/>
    <property type="project" value="InterPro"/>
</dbReference>
<dbReference type="GO" id="GO:0000287">
    <property type="term" value="F:magnesium ion binding"/>
    <property type="evidence" value="ECO:0007669"/>
    <property type="project" value="UniProtKB-UniRule"/>
</dbReference>
<dbReference type="GO" id="GO:0004634">
    <property type="term" value="F:phosphopyruvate hydratase activity"/>
    <property type="evidence" value="ECO:0007669"/>
    <property type="project" value="UniProtKB-UniRule"/>
</dbReference>
<dbReference type="GO" id="GO:0006096">
    <property type="term" value="P:glycolytic process"/>
    <property type="evidence" value="ECO:0007669"/>
    <property type="project" value="UniProtKB-UniRule"/>
</dbReference>
<dbReference type="CDD" id="cd03313">
    <property type="entry name" value="enolase"/>
    <property type="match status" value="1"/>
</dbReference>
<dbReference type="FunFam" id="3.20.20.120:FF:000001">
    <property type="entry name" value="Enolase"/>
    <property type="match status" value="1"/>
</dbReference>
<dbReference type="FunFam" id="3.30.390.10:FF:000001">
    <property type="entry name" value="Enolase"/>
    <property type="match status" value="1"/>
</dbReference>
<dbReference type="Gene3D" id="3.20.20.120">
    <property type="entry name" value="Enolase-like C-terminal domain"/>
    <property type="match status" value="1"/>
</dbReference>
<dbReference type="Gene3D" id="3.30.390.10">
    <property type="entry name" value="Enolase-like, N-terminal domain"/>
    <property type="match status" value="1"/>
</dbReference>
<dbReference type="HAMAP" id="MF_00318">
    <property type="entry name" value="Enolase"/>
    <property type="match status" value="1"/>
</dbReference>
<dbReference type="InterPro" id="IPR000941">
    <property type="entry name" value="Enolase"/>
</dbReference>
<dbReference type="InterPro" id="IPR036849">
    <property type="entry name" value="Enolase-like_C_sf"/>
</dbReference>
<dbReference type="InterPro" id="IPR029017">
    <property type="entry name" value="Enolase-like_N"/>
</dbReference>
<dbReference type="InterPro" id="IPR020810">
    <property type="entry name" value="Enolase_C"/>
</dbReference>
<dbReference type="InterPro" id="IPR020809">
    <property type="entry name" value="Enolase_CS"/>
</dbReference>
<dbReference type="InterPro" id="IPR020811">
    <property type="entry name" value="Enolase_N"/>
</dbReference>
<dbReference type="NCBIfam" id="TIGR01060">
    <property type="entry name" value="eno"/>
    <property type="match status" value="1"/>
</dbReference>
<dbReference type="PANTHER" id="PTHR11902">
    <property type="entry name" value="ENOLASE"/>
    <property type="match status" value="1"/>
</dbReference>
<dbReference type="PANTHER" id="PTHR11902:SF1">
    <property type="entry name" value="ENOLASE"/>
    <property type="match status" value="1"/>
</dbReference>
<dbReference type="Pfam" id="PF00113">
    <property type="entry name" value="Enolase_C"/>
    <property type="match status" value="1"/>
</dbReference>
<dbReference type="Pfam" id="PF03952">
    <property type="entry name" value="Enolase_N"/>
    <property type="match status" value="1"/>
</dbReference>
<dbReference type="PIRSF" id="PIRSF001400">
    <property type="entry name" value="Enolase"/>
    <property type="match status" value="1"/>
</dbReference>
<dbReference type="PRINTS" id="PR00148">
    <property type="entry name" value="ENOLASE"/>
</dbReference>
<dbReference type="SFLD" id="SFLDS00001">
    <property type="entry name" value="Enolase"/>
    <property type="match status" value="1"/>
</dbReference>
<dbReference type="SFLD" id="SFLDF00002">
    <property type="entry name" value="enolase"/>
    <property type="match status" value="1"/>
</dbReference>
<dbReference type="SMART" id="SM01192">
    <property type="entry name" value="Enolase_C"/>
    <property type="match status" value="1"/>
</dbReference>
<dbReference type="SMART" id="SM01193">
    <property type="entry name" value="Enolase_N"/>
    <property type="match status" value="1"/>
</dbReference>
<dbReference type="SUPFAM" id="SSF51604">
    <property type="entry name" value="Enolase C-terminal domain-like"/>
    <property type="match status" value="1"/>
</dbReference>
<dbReference type="SUPFAM" id="SSF54826">
    <property type="entry name" value="Enolase N-terminal domain-like"/>
    <property type="match status" value="1"/>
</dbReference>
<dbReference type="PROSITE" id="PS00164">
    <property type="entry name" value="ENOLASE"/>
    <property type="match status" value="1"/>
</dbReference>
<proteinExistence type="inferred from homology"/>
<evidence type="ECO:0000255" key="1">
    <source>
        <dbReference type="HAMAP-Rule" id="MF_00318"/>
    </source>
</evidence>
<feature type="chain" id="PRO_1000019205" description="Enolase">
    <location>
        <begin position="1"/>
        <end position="425"/>
    </location>
</feature>
<feature type="active site" description="Proton donor" evidence="1">
    <location>
        <position position="204"/>
    </location>
</feature>
<feature type="active site" description="Proton acceptor" evidence="1">
    <location>
        <position position="334"/>
    </location>
</feature>
<feature type="binding site" evidence="1">
    <location>
        <position position="162"/>
    </location>
    <ligand>
        <name>(2R)-2-phosphoglycerate</name>
        <dbReference type="ChEBI" id="CHEBI:58289"/>
    </ligand>
</feature>
<feature type="binding site" evidence="1">
    <location>
        <position position="241"/>
    </location>
    <ligand>
        <name>Mg(2+)</name>
        <dbReference type="ChEBI" id="CHEBI:18420"/>
    </ligand>
</feature>
<feature type="binding site" evidence="1">
    <location>
        <position position="282"/>
    </location>
    <ligand>
        <name>Mg(2+)</name>
        <dbReference type="ChEBI" id="CHEBI:18420"/>
    </ligand>
</feature>
<feature type="binding site" evidence="1">
    <location>
        <position position="309"/>
    </location>
    <ligand>
        <name>Mg(2+)</name>
        <dbReference type="ChEBI" id="CHEBI:18420"/>
    </ligand>
</feature>
<feature type="binding site" evidence="1">
    <location>
        <position position="334"/>
    </location>
    <ligand>
        <name>(2R)-2-phosphoglycerate</name>
        <dbReference type="ChEBI" id="CHEBI:58289"/>
    </ligand>
</feature>
<feature type="binding site" evidence="1">
    <location>
        <position position="363"/>
    </location>
    <ligand>
        <name>(2R)-2-phosphoglycerate</name>
        <dbReference type="ChEBI" id="CHEBI:58289"/>
    </ligand>
</feature>
<feature type="binding site" evidence="1">
    <location>
        <position position="364"/>
    </location>
    <ligand>
        <name>(2R)-2-phosphoglycerate</name>
        <dbReference type="ChEBI" id="CHEBI:58289"/>
    </ligand>
</feature>
<feature type="binding site" evidence="1">
    <location>
        <position position="385"/>
    </location>
    <ligand>
        <name>(2R)-2-phosphoglycerate</name>
        <dbReference type="ChEBI" id="CHEBI:58289"/>
    </ligand>
</feature>